<keyword id="KW-0025">Alternative splicing</keyword>
<keyword id="KW-0165">Cleavage on pair of basic residues</keyword>
<keyword id="KW-0217">Developmental protein</keyword>
<keyword id="KW-1015">Disulfide bond</keyword>
<keyword id="KW-0325">Glycoprotein</keyword>
<keyword id="KW-0339">Growth factor</keyword>
<keyword id="KW-0497">Mitogen</keyword>
<keyword id="KW-1185">Reference proteome</keyword>
<keyword id="KW-0964">Secreted</keyword>
<keyword id="KW-0732">Signal</keyword>
<organism>
    <name type="scientific">Rattus norvegicus</name>
    <name type="common">Rat</name>
    <dbReference type="NCBI Taxonomy" id="10116"/>
    <lineage>
        <taxon>Eukaryota</taxon>
        <taxon>Metazoa</taxon>
        <taxon>Chordata</taxon>
        <taxon>Craniata</taxon>
        <taxon>Vertebrata</taxon>
        <taxon>Euteleostomi</taxon>
        <taxon>Mammalia</taxon>
        <taxon>Eutheria</taxon>
        <taxon>Euarchontoglires</taxon>
        <taxon>Glires</taxon>
        <taxon>Rodentia</taxon>
        <taxon>Myomorpha</taxon>
        <taxon>Muroidea</taxon>
        <taxon>Muridae</taxon>
        <taxon>Murinae</taxon>
        <taxon>Rattus</taxon>
    </lineage>
</organism>
<reference key="1">
    <citation type="journal article" date="1993" name="Biochim. Biophys. Acta">
        <title>Conservation in sequence and affinity of human and rodent PDGF ligands and receptors.</title>
        <authorList>
            <person name="Herren B."/>
            <person name="Weyer K.A."/>
            <person name="Rouge M."/>
            <person name="Loetscher P."/>
            <person name="Pech M."/>
        </authorList>
    </citation>
    <scope>NUCLEOTIDE SEQUENCE [MRNA] OF 8-204</scope>
</reference>
<reference key="2">
    <citation type="journal article" date="1993" name="Am. J. Physiol.">
        <title>Increased expression of PDGF A- and B-chain genes in rat lungs with hypoxic pulmonary hypertension.</title>
        <authorList>
            <person name="Katayose D."/>
            <person name="Ohe M."/>
            <person name="Yamauchi K."/>
            <person name="Ogata M."/>
            <person name="Shirato K."/>
            <person name="Fujita H."/>
            <person name="Shibahara S."/>
            <person name="Takishima T."/>
        </authorList>
    </citation>
    <scope>NUCLEOTIDE SEQUENCE [MRNA]</scope>
</reference>
<reference key="3">
    <citation type="journal article" date="1992" name="J. Am. Soc. Nephrol.">
        <title>Cloning and expression of rat platelet-derived growth factor A-chain.</title>
        <authorList>
            <person name="Xia Y."/>
            <person name="Feng L."/>
            <person name="Tang W.W."/>
            <person name="Wilson C.B."/>
        </authorList>
    </citation>
    <scope>NUCLEOTIDE SEQUENCE [MRNA] (ISOFORM SHORT)</scope>
</reference>
<reference key="4">
    <citation type="journal article" date="1993" name="Mech. Ageing Dev.">
        <title>The age-dependent proliferation of rat aortic smooth muscle cells is independent of differential splicing of PDGF A-chain mRNA.</title>
        <authorList>
            <person name="Szabo P."/>
            <person name="Weksler D."/>
            <person name="Whittington E."/>
            <person name="Weksler B.B."/>
        </authorList>
    </citation>
    <scope>NUCLEOTIDE SEQUENCE [MRNA] OF 58-196 (ISOFORM SHORT)</scope>
    <source>
        <strain>Fischer 344</strain>
        <tissue>Smooth muscle</tissue>
    </source>
</reference>
<evidence type="ECO:0000250" key="1"/>
<evidence type="ECO:0000255" key="2"/>
<evidence type="ECO:0000303" key="3">
    <source>
    </source>
</evidence>
<evidence type="ECO:0000303" key="4">
    <source ref="3"/>
</evidence>
<evidence type="ECO:0000305" key="5"/>
<protein>
    <recommendedName>
        <fullName>Platelet-derived growth factor subunit A</fullName>
        <shortName>PDGF subunit A</shortName>
    </recommendedName>
    <alternativeName>
        <fullName>PDGF-1</fullName>
    </alternativeName>
    <alternativeName>
        <fullName>Platelet-derived growth factor A chain</fullName>
    </alternativeName>
    <alternativeName>
        <fullName>Platelet-derived growth factor alpha polypeptide</fullName>
    </alternativeName>
</protein>
<proteinExistence type="evidence at transcript level"/>
<comment type="function">
    <text evidence="1">Growth factor that plays an essential role in the regulation of embryonic development, cell proliferation, cell migration, survival and chemotaxis. Potent mitogen for cells of mesenchymal origin. Required for normal lung alveolar septum formation during embryogenesis, normal development of the gastrointestinal tract, normal development of Leydig cells and spermatogenesis. Required for normal oligodendrocyte development and normal myelination in the spinal cord and cerebellum. Plays an important role in wound healing. Signaling is modulated by the formation of heterodimers with PDGFB (By similarity).</text>
</comment>
<comment type="subunit">
    <text evidence="1">Homodimer; antiparallel disulfide-linked dimer. Heterodimer with PDGFB; antiparallel disulfide-linked dimer. The PDGFA homodimer interacts with PDGFRA homodimers, and with heterodimers formed by PDGFRA and PDGFRB. The heterodimer composed of PDGFA and PDGFB interacts with PDGFRA homodimers, and with heterodimers formed by PDGFRA and PDGFRB. Interacts with CSPG4 (By similarity).</text>
</comment>
<comment type="subcellular location">
    <subcellularLocation>
        <location>Secreted</location>
    </subcellularLocation>
    <text evidence="1">Released by platelets upon wounding.</text>
</comment>
<comment type="alternative products">
    <event type="alternative splicing"/>
    <isoform>
        <id>P28576-1</id>
        <name>Long</name>
        <sequence type="displayed"/>
    </isoform>
    <isoform>
        <id>P28576-2</id>
        <name>Short</name>
        <sequence type="described" ref="VSP_004609 VSP_004610"/>
    </isoform>
</comment>
<comment type="developmental stage">
    <text>In kidney epithelial tissues, the shorter form predominates in young (1 day old) rats while the longer form becomes more prevalant during aging.</text>
</comment>
<comment type="domain">
    <text>The long form contains a basic insert which acts as a cell retention signal.</text>
</comment>
<comment type="similarity">
    <text evidence="5">Belongs to the PDGF/VEGF growth factor family.</text>
</comment>
<sequence length="204" mass="23307">MRTWACLLLLGCGYLAHALAEEAEIPRELIERLARSQIHSIRDLQRLLEIDSVGAEDALETNLRAHGSHTVKHVPEKRPVPIRRKRSIEEAIPAVCKTRTVIYEIPRSQVDPTSANFLIWPPCVEVKRCTGCCNTSSVKCQPSRVHHRSVKVAKVEYVRKKPKLKEVQVRLEEHLECACATSNLNPDHREEETGRRRESGKKRK</sequence>
<name>PDGFA_RAT</name>
<gene>
    <name type="primary">Pdgfa</name>
    <name type="synonym">Rpa1</name>
</gene>
<accession>P28576</accession>
<feature type="signal peptide" evidence="1">
    <location>
        <begin position="1"/>
        <end position="20"/>
    </location>
</feature>
<feature type="propeptide" id="PRO_0000023362" description="Removed in mature form">
    <location>
        <begin position="21"/>
        <end position="85"/>
    </location>
</feature>
<feature type="chain" id="PRO_0000023363" description="Platelet-derived growth factor subunit A">
    <location>
        <begin position="86"/>
        <end position="204"/>
    </location>
</feature>
<feature type="region of interest" description="Receptor binding site" evidence="2">
    <location>
        <begin position="158"/>
        <end position="162"/>
    </location>
</feature>
<feature type="glycosylation site" description="N-linked (GlcNAc...) asparagine" evidence="2">
    <location>
        <position position="134"/>
    </location>
</feature>
<feature type="disulfide bond" evidence="1">
    <location>
        <begin position="96"/>
        <end position="140"/>
    </location>
</feature>
<feature type="disulfide bond" description="Interchain" evidence="1">
    <location>
        <position position="123"/>
    </location>
</feature>
<feature type="disulfide bond" evidence="1">
    <location>
        <begin position="129"/>
        <end position="177"/>
    </location>
</feature>
<feature type="disulfide bond" description="Interchain" evidence="1">
    <location>
        <position position="132"/>
    </location>
</feature>
<feature type="disulfide bond" evidence="1">
    <location>
        <begin position="133"/>
        <end position="179"/>
    </location>
</feature>
<feature type="splice variant" id="VSP_004609" description="In isoform Short." evidence="3 4">
    <original>GRR</original>
    <variation>DVR</variation>
    <location>
        <begin position="194"/>
        <end position="196"/>
    </location>
</feature>
<feature type="splice variant" id="VSP_004610" description="In isoform Short." evidence="3 4">
    <location>
        <begin position="197"/>
        <end position="204"/>
    </location>
</feature>
<feature type="sequence conflict" description="In Ref. 2; BAA00987." evidence="5" ref="2">
    <original>KRSIEEAIPAVCKTRTVIYEIPRSQVD</original>
    <variation>REVLRKPFPQFARPGRSFTRYLGARWT</variation>
    <location>
        <begin position="85"/>
        <end position="111"/>
    </location>
</feature>
<feature type="sequence conflict" description="In Ref. 3; AAA41932." evidence="5" ref="3">
    <original>I</original>
    <variation>T</variation>
    <location>
        <position position="119"/>
    </location>
</feature>
<dbReference type="EMBL" id="L06894">
    <property type="protein sequence ID" value="AAB59693.1"/>
    <property type="molecule type" value="mRNA"/>
</dbReference>
<dbReference type="EMBL" id="Z14120">
    <property type="protein sequence ID" value="CAA78490.1"/>
    <property type="molecule type" value="mRNA"/>
</dbReference>
<dbReference type="EMBL" id="D10106">
    <property type="protein sequence ID" value="BAA00987.1"/>
    <property type="molecule type" value="mRNA"/>
</dbReference>
<dbReference type="EMBL" id="L06238">
    <property type="protein sequence ID" value="AAA41932.1"/>
    <property type="molecule type" value="mRNA"/>
</dbReference>
<dbReference type="EMBL" id="S57864">
    <property type="protein sequence ID" value="AAB26134.2"/>
    <property type="molecule type" value="mRNA"/>
</dbReference>
<dbReference type="PIR" id="A48851">
    <property type="entry name" value="A48851"/>
</dbReference>
<dbReference type="PIR" id="S25096">
    <property type="entry name" value="S25096"/>
</dbReference>
<dbReference type="RefSeq" id="NP_036933.2">
    <molecule id="P28576-2"/>
    <property type="nucleotide sequence ID" value="NM_012801.3"/>
</dbReference>
<dbReference type="RefSeq" id="XP_038945034.1">
    <molecule id="P28576-2"/>
    <property type="nucleotide sequence ID" value="XM_039089106.2"/>
</dbReference>
<dbReference type="SMR" id="P28576"/>
<dbReference type="ComplexPortal" id="CPX-6591">
    <property type="entry name" value="Platelet-derived growth factor AB complex"/>
</dbReference>
<dbReference type="FunCoup" id="P28576">
    <property type="interactions" value="619"/>
</dbReference>
<dbReference type="STRING" id="10116.ENSRNOP00000074787"/>
<dbReference type="BindingDB" id="P28576"/>
<dbReference type="GlyCosmos" id="P28576">
    <property type="glycosylation" value="1 site, No reported glycans"/>
</dbReference>
<dbReference type="GlyGen" id="P28576">
    <property type="glycosylation" value="1 site"/>
</dbReference>
<dbReference type="PhosphoSitePlus" id="P28576"/>
<dbReference type="PaxDb" id="10116-ENSRNOP00000001775"/>
<dbReference type="DNASU" id="25266"/>
<dbReference type="Ensembl" id="ENSRNOT00000042117.7">
    <molecule id="P28576-2"/>
    <property type="protein sequence ID" value="ENSRNOP00000040116.4"/>
    <property type="gene ID" value="ENSRNOG00000001312.9"/>
</dbReference>
<dbReference type="GeneID" id="25266"/>
<dbReference type="KEGG" id="rno:25266"/>
<dbReference type="UCSC" id="RGD:3282">
    <molecule id="P28576-1"/>
    <property type="organism name" value="rat"/>
</dbReference>
<dbReference type="AGR" id="RGD:3282"/>
<dbReference type="CTD" id="5154"/>
<dbReference type="RGD" id="3282">
    <property type="gene designation" value="Pdgfa"/>
</dbReference>
<dbReference type="VEuPathDB" id="HostDB:ENSRNOG00000001312"/>
<dbReference type="eggNOG" id="ENOG502QVAU">
    <property type="taxonomic scope" value="Eukaryota"/>
</dbReference>
<dbReference type="GeneTree" id="ENSGT00940000159039"/>
<dbReference type="InParanoid" id="P28576"/>
<dbReference type="PhylomeDB" id="P28576"/>
<dbReference type="Reactome" id="R-RNO-114608">
    <property type="pathway name" value="Platelet degranulation"/>
</dbReference>
<dbReference type="Reactome" id="R-RNO-1257604">
    <property type="pathway name" value="PIP3 activates AKT signaling"/>
</dbReference>
<dbReference type="Reactome" id="R-RNO-186763">
    <property type="pathway name" value="Downstream signal transduction"/>
</dbReference>
<dbReference type="Reactome" id="R-RNO-186797">
    <property type="pathway name" value="Signaling by PDGF"/>
</dbReference>
<dbReference type="Reactome" id="R-RNO-5673001">
    <property type="pathway name" value="RAF/MAP kinase cascade"/>
</dbReference>
<dbReference type="Reactome" id="R-RNO-6811558">
    <property type="pathway name" value="PI5P, PP2A and IER3 Regulate PI3K/AKT Signaling"/>
</dbReference>
<dbReference type="PRO" id="PR:P28576"/>
<dbReference type="Proteomes" id="UP000002494">
    <property type="component" value="Chromosome 12"/>
</dbReference>
<dbReference type="Bgee" id="ENSRNOG00000001312">
    <property type="expression patterns" value="Expressed in pancreas and 19 other cell types or tissues"/>
</dbReference>
<dbReference type="ExpressionAtlas" id="P28576">
    <property type="expression patterns" value="baseline and differential"/>
</dbReference>
<dbReference type="GO" id="GO:0009986">
    <property type="term" value="C:cell surface"/>
    <property type="evidence" value="ECO:0000250"/>
    <property type="project" value="UniProtKB"/>
</dbReference>
<dbReference type="GO" id="GO:0005615">
    <property type="term" value="C:extracellular space"/>
    <property type="evidence" value="ECO:0000250"/>
    <property type="project" value="UniProtKB"/>
</dbReference>
<dbReference type="GO" id="GO:0005902">
    <property type="term" value="C:microvillus"/>
    <property type="evidence" value="ECO:0000250"/>
    <property type="project" value="UniProtKB"/>
</dbReference>
<dbReference type="GO" id="GO:1990265">
    <property type="term" value="C:platelet-derived growth factor complex"/>
    <property type="evidence" value="ECO:0000266"/>
    <property type="project" value="RGD"/>
</dbReference>
<dbReference type="GO" id="GO:1990270">
    <property type="term" value="C:platelet-derived growth factor receptor-ligand complex"/>
    <property type="evidence" value="ECO:0000266"/>
    <property type="project" value="RGD"/>
</dbReference>
<dbReference type="GO" id="GO:0005518">
    <property type="term" value="F:collagen binding"/>
    <property type="evidence" value="ECO:0000250"/>
    <property type="project" value="UniProtKB"/>
</dbReference>
<dbReference type="GO" id="GO:0008083">
    <property type="term" value="F:growth factor activity"/>
    <property type="evidence" value="ECO:0000250"/>
    <property type="project" value="UniProtKB"/>
</dbReference>
<dbReference type="GO" id="GO:0048407">
    <property type="term" value="F:platelet-derived growth factor binding"/>
    <property type="evidence" value="ECO:0000266"/>
    <property type="project" value="RGD"/>
</dbReference>
<dbReference type="GO" id="GO:0005161">
    <property type="term" value="F:platelet-derived growth factor receptor binding"/>
    <property type="evidence" value="ECO:0000250"/>
    <property type="project" value="UniProtKB"/>
</dbReference>
<dbReference type="GO" id="GO:0046982">
    <property type="term" value="F:protein heterodimerization activity"/>
    <property type="evidence" value="ECO:0000266"/>
    <property type="project" value="RGD"/>
</dbReference>
<dbReference type="GO" id="GO:0042803">
    <property type="term" value="F:protein homodimerization activity"/>
    <property type="evidence" value="ECO:0000250"/>
    <property type="project" value="UniProtKB"/>
</dbReference>
<dbReference type="GO" id="GO:0030036">
    <property type="term" value="P:actin cytoskeleton organization"/>
    <property type="evidence" value="ECO:0000250"/>
    <property type="project" value="UniProtKB"/>
</dbReference>
<dbReference type="GO" id="GO:0001525">
    <property type="term" value="P:angiogenesis"/>
    <property type="evidence" value="ECO:0000250"/>
    <property type="project" value="UniProtKB"/>
</dbReference>
<dbReference type="GO" id="GO:0009887">
    <property type="term" value="P:animal organ morphogenesis"/>
    <property type="evidence" value="ECO:0000250"/>
    <property type="project" value="UniProtKB"/>
</dbReference>
<dbReference type="GO" id="GO:0060348">
    <property type="term" value="P:bone development"/>
    <property type="evidence" value="ECO:0000266"/>
    <property type="project" value="RGD"/>
</dbReference>
<dbReference type="GO" id="GO:0008283">
    <property type="term" value="P:cell population proliferation"/>
    <property type="evidence" value="ECO:0000266"/>
    <property type="project" value="RGD"/>
</dbReference>
<dbReference type="GO" id="GO:0030031">
    <property type="term" value="P:cell projection assembly"/>
    <property type="evidence" value="ECO:0000250"/>
    <property type="project" value="UniProtKB"/>
</dbReference>
<dbReference type="GO" id="GO:0071560">
    <property type="term" value="P:cellular response to transforming growth factor beta stimulus"/>
    <property type="evidence" value="ECO:0000270"/>
    <property type="project" value="RGD"/>
</dbReference>
<dbReference type="GO" id="GO:0048565">
    <property type="term" value="P:digestive tract development"/>
    <property type="evidence" value="ECO:0000266"/>
    <property type="project" value="RGD"/>
</dbReference>
<dbReference type="GO" id="GO:1990401">
    <property type="term" value="P:embryonic lung development"/>
    <property type="evidence" value="ECO:0000266"/>
    <property type="project" value="RGD"/>
</dbReference>
<dbReference type="GO" id="GO:0001942">
    <property type="term" value="P:hair follicle development"/>
    <property type="evidence" value="ECO:0000250"/>
    <property type="project" value="UniProtKB"/>
</dbReference>
<dbReference type="GO" id="GO:0048839">
    <property type="term" value="P:inner ear development"/>
    <property type="evidence" value="ECO:0000270"/>
    <property type="project" value="RGD"/>
</dbReference>
<dbReference type="GO" id="GO:0048286">
    <property type="term" value="P:lung alveolus development"/>
    <property type="evidence" value="ECO:0000250"/>
    <property type="project" value="UniProtKB"/>
</dbReference>
<dbReference type="GO" id="GO:0008584">
    <property type="term" value="P:male gonad development"/>
    <property type="evidence" value="ECO:0000270"/>
    <property type="project" value="RGD"/>
</dbReference>
<dbReference type="GO" id="GO:0050919">
    <property type="term" value="P:negative chemotaxis"/>
    <property type="evidence" value="ECO:0000250"/>
    <property type="project" value="UniProtKB"/>
</dbReference>
<dbReference type="GO" id="GO:0010512">
    <property type="term" value="P:negative regulation of phosphatidylinositol biosynthetic process"/>
    <property type="evidence" value="ECO:0000250"/>
    <property type="project" value="UniProtKB"/>
</dbReference>
<dbReference type="GO" id="GO:0010544">
    <property type="term" value="P:negative regulation of platelet activation"/>
    <property type="evidence" value="ECO:0000250"/>
    <property type="project" value="UniProtKB"/>
</dbReference>
<dbReference type="GO" id="GO:0048008">
    <property type="term" value="P:platelet-derived growth factor receptor signaling pathway"/>
    <property type="evidence" value="ECO:0000250"/>
    <property type="project" value="UniProtKB"/>
</dbReference>
<dbReference type="GO" id="GO:0051781">
    <property type="term" value="P:positive regulation of cell division"/>
    <property type="evidence" value="ECO:0007669"/>
    <property type="project" value="UniProtKB-KW"/>
</dbReference>
<dbReference type="GO" id="GO:0030335">
    <property type="term" value="P:positive regulation of cell migration"/>
    <property type="evidence" value="ECO:0000250"/>
    <property type="project" value="UniProtKB"/>
</dbReference>
<dbReference type="GO" id="GO:0008284">
    <property type="term" value="P:positive regulation of cell population proliferation"/>
    <property type="evidence" value="ECO:0000315"/>
    <property type="project" value="RGD"/>
</dbReference>
<dbReference type="GO" id="GO:0070374">
    <property type="term" value="P:positive regulation of ERK1 and ERK2 cascade"/>
    <property type="evidence" value="ECO:0000250"/>
    <property type="project" value="UniProtKB"/>
</dbReference>
<dbReference type="GO" id="GO:0048146">
    <property type="term" value="P:positive regulation of fibroblast proliferation"/>
    <property type="evidence" value="ECO:0000250"/>
    <property type="project" value="UniProtKB"/>
</dbReference>
<dbReference type="GO" id="GO:0043410">
    <property type="term" value="P:positive regulation of MAPK cascade"/>
    <property type="evidence" value="ECO:0000250"/>
    <property type="project" value="UniProtKB"/>
</dbReference>
<dbReference type="GO" id="GO:0002053">
    <property type="term" value="P:positive regulation of mesenchymal cell proliferation"/>
    <property type="evidence" value="ECO:0000250"/>
    <property type="project" value="UniProtKB"/>
</dbReference>
<dbReference type="GO" id="GO:0035793">
    <property type="term" value="P:positive regulation of metanephric mesenchymal cell migration by platelet-derived growth factor receptor-beta signaling pathway"/>
    <property type="evidence" value="ECO:0000250"/>
    <property type="project" value="UniProtKB"/>
</dbReference>
<dbReference type="GO" id="GO:0051897">
    <property type="term" value="P:positive regulation of phosphatidylinositol 3-kinase/protein kinase B signal transduction"/>
    <property type="evidence" value="ECO:0000250"/>
    <property type="project" value="UniProtKB"/>
</dbReference>
<dbReference type="GO" id="GO:0060683">
    <property type="term" value="P:regulation of branching involved in salivary gland morphogenesis by epithelial-mesenchymal signaling"/>
    <property type="evidence" value="ECO:0000250"/>
    <property type="project" value="UniProtKB"/>
</dbReference>
<dbReference type="GO" id="GO:0014910">
    <property type="term" value="P:regulation of smooth muscle cell migration"/>
    <property type="evidence" value="ECO:0000250"/>
    <property type="project" value="UniProtKB"/>
</dbReference>
<dbReference type="GO" id="GO:0032355">
    <property type="term" value="P:response to estradiol"/>
    <property type="evidence" value="ECO:0000270"/>
    <property type="project" value="RGD"/>
</dbReference>
<dbReference type="GO" id="GO:0001666">
    <property type="term" value="P:response to hypoxia"/>
    <property type="evidence" value="ECO:0000270"/>
    <property type="project" value="RGD"/>
</dbReference>
<dbReference type="GO" id="GO:0032526">
    <property type="term" value="P:response to retinoic acid"/>
    <property type="evidence" value="ECO:0000270"/>
    <property type="project" value="RGD"/>
</dbReference>
<dbReference type="GO" id="GO:0009611">
    <property type="term" value="P:response to wounding"/>
    <property type="evidence" value="ECO:0000250"/>
    <property type="project" value="UniProtKB"/>
</dbReference>
<dbReference type="GO" id="GO:0009410">
    <property type="term" value="P:response to xenobiotic stimulus"/>
    <property type="evidence" value="ECO:0000270"/>
    <property type="project" value="RGD"/>
</dbReference>
<dbReference type="GO" id="GO:0043588">
    <property type="term" value="P:skin development"/>
    <property type="evidence" value="ECO:0000250"/>
    <property type="project" value="UniProtKB"/>
</dbReference>
<dbReference type="CDD" id="cd00135">
    <property type="entry name" value="PDGF"/>
    <property type="match status" value="1"/>
</dbReference>
<dbReference type="FunFam" id="2.10.90.10:FF:000017">
    <property type="entry name" value="Platelet derived growth factor subunit A"/>
    <property type="match status" value="1"/>
</dbReference>
<dbReference type="Gene3D" id="2.10.90.10">
    <property type="entry name" value="Cystine-knot cytokines"/>
    <property type="match status" value="1"/>
</dbReference>
<dbReference type="InterPro" id="IPR029034">
    <property type="entry name" value="Cystine-knot_cytokine"/>
</dbReference>
<dbReference type="InterPro" id="IPR023581">
    <property type="entry name" value="PD_growth_factor_CS"/>
</dbReference>
<dbReference type="InterPro" id="IPR000072">
    <property type="entry name" value="PDGF/VEGF_dom"/>
</dbReference>
<dbReference type="InterPro" id="IPR006782">
    <property type="entry name" value="PDGF_N"/>
</dbReference>
<dbReference type="PANTHER" id="PTHR11633">
    <property type="entry name" value="PLATELET-DERIVED GROWTH FACTOR"/>
    <property type="match status" value="1"/>
</dbReference>
<dbReference type="PANTHER" id="PTHR11633:SF3">
    <property type="entry name" value="PLATELET-DERIVED GROWTH FACTOR SUBUNIT A"/>
    <property type="match status" value="1"/>
</dbReference>
<dbReference type="Pfam" id="PF00341">
    <property type="entry name" value="PDGF"/>
    <property type="match status" value="1"/>
</dbReference>
<dbReference type="Pfam" id="PF04692">
    <property type="entry name" value="PDGF_N"/>
    <property type="match status" value="1"/>
</dbReference>
<dbReference type="SMART" id="SM00141">
    <property type="entry name" value="PDGF"/>
    <property type="match status" value="1"/>
</dbReference>
<dbReference type="SUPFAM" id="SSF57501">
    <property type="entry name" value="Cystine-knot cytokines"/>
    <property type="match status" value="1"/>
</dbReference>
<dbReference type="PROSITE" id="PS00249">
    <property type="entry name" value="PDGF_1"/>
    <property type="match status" value="1"/>
</dbReference>
<dbReference type="PROSITE" id="PS50278">
    <property type="entry name" value="PDGF_2"/>
    <property type="match status" value="1"/>
</dbReference>